<proteinExistence type="evidence at transcript level"/>
<organism>
    <name type="scientific">Arabidopsis thaliana</name>
    <name type="common">Mouse-ear cress</name>
    <dbReference type="NCBI Taxonomy" id="3702"/>
    <lineage>
        <taxon>Eukaryota</taxon>
        <taxon>Viridiplantae</taxon>
        <taxon>Streptophyta</taxon>
        <taxon>Embryophyta</taxon>
        <taxon>Tracheophyta</taxon>
        <taxon>Spermatophyta</taxon>
        <taxon>Magnoliopsida</taxon>
        <taxon>eudicotyledons</taxon>
        <taxon>Gunneridae</taxon>
        <taxon>Pentapetalae</taxon>
        <taxon>rosids</taxon>
        <taxon>malvids</taxon>
        <taxon>Brassicales</taxon>
        <taxon>Brassicaceae</taxon>
        <taxon>Camelineae</taxon>
        <taxon>Arabidopsis</taxon>
    </lineage>
</organism>
<dbReference type="EMBL" id="AF262038">
    <property type="protein sequence ID" value="AAF88002.1"/>
    <property type="molecule type" value="Genomic_DNA"/>
</dbReference>
<dbReference type="EMBL" id="CP002688">
    <property type="protein sequence ID" value="AED93801.1"/>
    <property type="molecule type" value="Genomic_DNA"/>
</dbReference>
<dbReference type="EMBL" id="AY052227">
    <property type="protein sequence ID" value="AAK97697.1"/>
    <property type="molecule type" value="mRNA"/>
</dbReference>
<dbReference type="EMBL" id="BT002639">
    <property type="protein sequence ID" value="AAO11555.1"/>
    <property type="molecule type" value="mRNA"/>
</dbReference>
<dbReference type="EMBL" id="AY084904">
    <property type="protein sequence ID" value="AAM61467.1"/>
    <property type="molecule type" value="mRNA"/>
</dbReference>
<dbReference type="RefSeq" id="NP_680234.1">
    <property type="nucleotide sequence ID" value="NM_147929.4"/>
</dbReference>
<dbReference type="SMR" id="Q9LKU8"/>
<dbReference type="FunCoup" id="Q9LKU8">
    <property type="interactions" value="1"/>
</dbReference>
<dbReference type="iPTMnet" id="Q9LKU8"/>
<dbReference type="PaxDb" id="3702-AT5G28460.1"/>
<dbReference type="EnsemblPlants" id="AT5G28460.1">
    <property type="protein sequence ID" value="AT5G28460.1"/>
    <property type="gene ID" value="AT5G28460"/>
</dbReference>
<dbReference type="GeneID" id="832933"/>
<dbReference type="Gramene" id="AT5G28460.1">
    <property type="protein sequence ID" value="AT5G28460.1"/>
    <property type="gene ID" value="AT5G28460"/>
</dbReference>
<dbReference type="KEGG" id="ath:AT5G28460"/>
<dbReference type="Araport" id="AT5G28460"/>
<dbReference type="TAIR" id="AT5G28460"/>
<dbReference type="eggNOG" id="KOG4197">
    <property type="taxonomic scope" value="Eukaryota"/>
</dbReference>
<dbReference type="HOGENOM" id="CLU_002706_49_12_1"/>
<dbReference type="InParanoid" id="Q9LKU8"/>
<dbReference type="OMA" id="KTNWLTQ"/>
<dbReference type="PhylomeDB" id="Q9LKU8"/>
<dbReference type="PRO" id="PR:Q9LKU8"/>
<dbReference type="Proteomes" id="UP000006548">
    <property type="component" value="Chromosome 5"/>
</dbReference>
<dbReference type="ExpressionAtlas" id="Q9LKU8">
    <property type="expression patterns" value="baseline"/>
</dbReference>
<dbReference type="Gene3D" id="1.25.40.10">
    <property type="entry name" value="Tetratricopeptide repeat domain"/>
    <property type="match status" value="7"/>
</dbReference>
<dbReference type="InterPro" id="IPR002885">
    <property type="entry name" value="Pentatricopeptide_rpt"/>
</dbReference>
<dbReference type="InterPro" id="IPR011990">
    <property type="entry name" value="TPR-like_helical_dom_sf"/>
</dbReference>
<dbReference type="NCBIfam" id="TIGR00756">
    <property type="entry name" value="PPR"/>
    <property type="match status" value="11"/>
</dbReference>
<dbReference type="PANTHER" id="PTHR47936:SF1">
    <property type="entry name" value="PENTATRICOPEPTIDE REPEAT-CONTAINING PROTEIN GUN1, CHLOROPLASTIC"/>
    <property type="match status" value="1"/>
</dbReference>
<dbReference type="PANTHER" id="PTHR47936">
    <property type="entry name" value="PPR_LONG DOMAIN-CONTAINING PROTEIN"/>
    <property type="match status" value="1"/>
</dbReference>
<dbReference type="Pfam" id="PF01535">
    <property type="entry name" value="PPR"/>
    <property type="match status" value="2"/>
</dbReference>
<dbReference type="Pfam" id="PF12854">
    <property type="entry name" value="PPR_1"/>
    <property type="match status" value="2"/>
</dbReference>
<dbReference type="Pfam" id="PF13041">
    <property type="entry name" value="PPR_2"/>
    <property type="match status" value="4"/>
</dbReference>
<dbReference type="SUPFAM" id="SSF81901">
    <property type="entry name" value="HCP-like"/>
    <property type="match status" value="1"/>
</dbReference>
<dbReference type="PROSITE" id="PS51375">
    <property type="entry name" value="PPR"/>
    <property type="match status" value="16"/>
</dbReference>
<protein>
    <recommendedName>
        <fullName>Pentatricopeptide repeat-containing protein At5g28460</fullName>
    </recommendedName>
</protein>
<accession>Q9LKU8</accession>
<accession>Q8LFD9</accession>
<gene>
    <name type="ordered locus">At5g28460</name>
    <name type="ORF">F21B23.1</name>
</gene>
<name>PP401_ARATH</name>
<feature type="chain" id="PRO_0000363538" description="Pentatricopeptide repeat-containing protein At5g28460">
    <location>
        <begin position="1"/>
        <end position="766"/>
    </location>
</feature>
<feature type="repeat" description="PPR 1">
    <location>
        <begin position="151"/>
        <end position="181"/>
    </location>
</feature>
<feature type="repeat" description="PPR 2">
    <location>
        <begin position="184"/>
        <end position="218"/>
    </location>
</feature>
<feature type="repeat" description="PPR 3">
    <location>
        <begin position="221"/>
        <end position="257"/>
    </location>
</feature>
<feature type="repeat" description="PPR 4">
    <location>
        <begin position="258"/>
        <end position="292"/>
    </location>
</feature>
<feature type="repeat" description="PPR 5">
    <location>
        <begin position="293"/>
        <end position="327"/>
    </location>
</feature>
<feature type="repeat" description="PPR 6">
    <location>
        <begin position="328"/>
        <end position="358"/>
    </location>
</feature>
<feature type="repeat" description="PPR 7">
    <location>
        <begin position="369"/>
        <end position="404"/>
    </location>
</feature>
<feature type="repeat" description="PPR 8">
    <location>
        <begin position="405"/>
        <end position="439"/>
    </location>
</feature>
<feature type="repeat" description="PPR 9">
    <location>
        <begin position="440"/>
        <end position="474"/>
    </location>
</feature>
<feature type="repeat" description="PPR 10">
    <location>
        <begin position="475"/>
        <end position="509"/>
    </location>
</feature>
<feature type="repeat" description="PPR 11">
    <location>
        <begin position="510"/>
        <end position="544"/>
    </location>
</feature>
<feature type="repeat" description="PPR 12">
    <location>
        <begin position="545"/>
        <end position="579"/>
    </location>
</feature>
<feature type="repeat" description="PPR 13">
    <location>
        <begin position="580"/>
        <end position="614"/>
    </location>
</feature>
<feature type="repeat" description="PPR 14">
    <location>
        <begin position="615"/>
        <end position="650"/>
    </location>
</feature>
<feature type="repeat" description="PPR 15">
    <location>
        <begin position="651"/>
        <end position="685"/>
    </location>
</feature>
<feature type="repeat" description="PPR 16">
    <location>
        <begin position="686"/>
        <end position="720"/>
    </location>
</feature>
<feature type="sequence conflict" description="In Ref. 4; AAM61467." evidence="1" ref="4">
    <original>I</original>
    <variation>V</variation>
    <location>
        <position position="152"/>
    </location>
</feature>
<feature type="sequence conflict" description="In Ref. 4; AAM61467." evidence="1" ref="4">
    <original>E</original>
    <variation>G</variation>
    <location>
        <position position="235"/>
    </location>
</feature>
<feature type="sequence conflict" description="In Ref. 4; AAM61467." evidence="1" ref="4">
    <original>T</original>
    <variation>A</variation>
    <location>
        <position position="277"/>
    </location>
</feature>
<feature type="sequence conflict" description="In Ref. 4; AAM61467." evidence="1" ref="4">
    <original>C</original>
    <variation>S</variation>
    <location>
        <position position="340"/>
    </location>
</feature>
<feature type="sequence conflict" description="In Ref. 4; AAM61467." evidence="1" ref="4">
    <original>G</original>
    <variation>V</variation>
    <location>
        <position position="420"/>
    </location>
</feature>
<sequence>MSIMLSISRRQNSYILLNHSRFLRRFSYDVDPRPEIKSESQEFVVVKFVKTLQNTPQHDWASSESLSALVVSSSSASPLVFSQITRRLGSYSLAISFFEYLDAKSQSLKRREESLSLALQSVIEFAGSEPDPRDKLLRLYEIAKEKNIPLTIVATKLLIRWFGRMGMVNQSVLVYERLDSNMKNSQVRNVVVDVLLRNGLVDDAFKVLDEMLQKESVFPPNRITADIVLHEVWKERLLTEEKIIALISRFSSHGVSPNSVWLTRFISSLCKNARANTAWDILSDLMKNKTPLEAPPFNALLSCLGRNMDISRMNDLVLKMDEVKIRPDVVTLGILINTLCKSRRVDEALEVFEQMRGKRTDDGNVIKADSIHFNTLIDGLCKVGRLKEAEELLVRMKLEERCVPNAVTYNCLIDGYCRAGKLETAKEVVSRMKEDEIKPNVVTVNTIVGGMCRHHGLNMAVVFFMDMEKEGVKGNVVTYMTLIHACCSVSNVEKAMYWYEKMLEAGCSPDAKIYYALISGLCQVRRDHDAIRVVEKLKEGGFSLDLLAYNMLIGLFCDKNNAEKVYEMLTDMEKEGKKPDSITYNTLISFFGKHKDFESVERMMEQMREDGLDPTVTTYGAVIDAYCSVGELDEALKLFKDMGLHSKVNPNTVIYNILINAFSKLGNFGQALSLKEEMKMKMVRPNVETYNALFKCLNEKTQGETLLKLMDEMVEQSCEPNQITMEILMERLSGSDELVKLRKFMQGYSVASPTEKASPFDVFSLG</sequence>
<evidence type="ECO:0000305" key="1"/>
<keyword id="KW-1185">Reference proteome</keyword>
<keyword id="KW-0677">Repeat</keyword>
<reference key="1">
    <citation type="journal article" date="2000" name="Nature">
        <title>Sequence and analysis of chromosome 5 of the plant Arabidopsis thaliana.</title>
        <authorList>
            <person name="Tabata S."/>
            <person name="Kaneko T."/>
            <person name="Nakamura Y."/>
            <person name="Kotani H."/>
            <person name="Kato T."/>
            <person name="Asamizu E."/>
            <person name="Miyajima N."/>
            <person name="Sasamoto S."/>
            <person name="Kimura T."/>
            <person name="Hosouchi T."/>
            <person name="Kawashima K."/>
            <person name="Kohara M."/>
            <person name="Matsumoto M."/>
            <person name="Matsuno A."/>
            <person name="Muraki A."/>
            <person name="Nakayama S."/>
            <person name="Nakazaki N."/>
            <person name="Naruo K."/>
            <person name="Okumura S."/>
            <person name="Shinpo S."/>
            <person name="Takeuchi C."/>
            <person name="Wada T."/>
            <person name="Watanabe A."/>
            <person name="Yamada M."/>
            <person name="Yasuda M."/>
            <person name="Sato S."/>
            <person name="de la Bastide M."/>
            <person name="Huang E."/>
            <person name="Spiegel L."/>
            <person name="Gnoj L."/>
            <person name="O'Shaughnessy A."/>
            <person name="Preston R."/>
            <person name="Habermann K."/>
            <person name="Murray J."/>
            <person name="Johnson D."/>
            <person name="Rohlfing T."/>
            <person name="Nelson J."/>
            <person name="Stoneking T."/>
            <person name="Pepin K."/>
            <person name="Spieth J."/>
            <person name="Sekhon M."/>
            <person name="Armstrong J."/>
            <person name="Becker M."/>
            <person name="Belter E."/>
            <person name="Cordum H."/>
            <person name="Cordes M."/>
            <person name="Courtney L."/>
            <person name="Courtney W."/>
            <person name="Dante M."/>
            <person name="Du H."/>
            <person name="Edwards J."/>
            <person name="Fryman J."/>
            <person name="Haakensen B."/>
            <person name="Lamar E."/>
            <person name="Latreille P."/>
            <person name="Leonard S."/>
            <person name="Meyer R."/>
            <person name="Mulvaney E."/>
            <person name="Ozersky P."/>
            <person name="Riley A."/>
            <person name="Strowmatt C."/>
            <person name="Wagner-McPherson C."/>
            <person name="Wollam A."/>
            <person name="Yoakum M."/>
            <person name="Bell M."/>
            <person name="Dedhia N."/>
            <person name="Parnell L."/>
            <person name="Shah R."/>
            <person name="Rodriguez M."/>
            <person name="Hoon See L."/>
            <person name="Vil D."/>
            <person name="Baker J."/>
            <person name="Kirchoff K."/>
            <person name="Toth K."/>
            <person name="King L."/>
            <person name="Bahret A."/>
            <person name="Miller B."/>
            <person name="Marra M.A."/>
            <person name="Martienssen R."/>
            <person name="McCombie W.R."/>
            <person name="Wilson R.K."/>
            <person name="Murphy G."/>
            <person name="Bancroft I."/>
            <person name="Volckaert G."/>
            <person name="Wambutt R."/>
            <person name="Duesterhoeft A."/>
            <person name="Stiekema W."/>
            <person name="Pohl T."/>
            <person name="Entian K.-D."/>
            <person name="Terryn N."/>
            <person name="Hartley N."/>
            <person name="Bent E."/>
            <person name="Johnson S."/>
            <person name="Langham S.-A."/>
            <person name="McCullagh B."/>
            <person name="Robben J."/>
            <person name="Grymonprez B."/>
            <person name="Zimmermann W."/>
            <person name="Ramsperger U."/>
            <person name="Wedler H."/>
            <person name="Balke K."/>
            <person name="Wedler E."/>
            <person name="Peters S."/>
            <person name="van Staveren M."/>
            <person name="Dirkse W."/>
            <person name="Mooijman P."/>
            <person name="Klein Lankhorst R."/>
            <person name="Weitzenegger T."/>
            <person name="Bothe G."/>
            <person name="Rose M."/>
            <person name="Hauf J."/>
            <person name="Berneiser S."/>
            <person name="Hempel S."/>
            <person name="Feldpausch M."/>
            <person name="Lamberth S."/>
            <person name="Villarroel R."/>
            <person name="Gielen J."/>
            <person name="Ardiles W."/>
            <person name="Bents O."/>
            <person name="Lemcke K."/>
            <person name="Kolesov G."/>
            <person name="Mayer K.F.X."/>
            <person name="Rudd S."/>
            <person name="Schoof H."/>
            <person name="Schueller C."/>
            <person name="Zaccaria P."/>
            <person name="Mewes H.-W."/>
            <person name="Bevan M."/>
            <person name="Fransz P.F."/>
        </authorList>
    </citation>
    <scope>NUCLEOTIDE SEQUENCE [LARGE SCALE GENOMIC DNA]</scope>
    <source>
        <strain>cv. Columbia</strain>
    </source>
</reference>
<reference key="2">
    <citation type="journal article" date="2017" name="Plant J.">
        <title>Araport11: a complete reannotation of the Arabidopsis thaliana reference genome.</title>
        <authorList>
            <person name="Cheng C.Y."/>
            <person name="Krishnakumar V."/>
            <person name="Chan A.P."/>
            <person name="Thibaud-Nissen F."/>
            <person name="Schobel S."/>
            <person name="Town C.D."/>
        </authorList>
    </citation>
    <scope>GENOME REANNOTATION</scope>
    <source>
        <strain>cv. Columbia</strain>
    </source>
</reference>
<reference key="3">
    <citation type="journal article" date="2003" name="Science">
        <title>Empirical analysis of transcriptional activity in the Arabidopsis genome.</title>
        <authorList>
            <person name="Yamada K."/>
            <person name="Lim J."/>
            <person name="Dale J.M."/>
            <person name="Chen H."/>
            <person name="Shinn P."/>
            <person name="Palm C.J."/>
            <person name="Southwick A.M."/>
            <person name="Wu H.C."/>
            <person name="Kim C.J."/>
            <person name="Nguyen M."/>
            <person name="Pham P.K."/>
            <person name="Cheuk R.F."/>
            <person name="Karlin-Newmann G."/>
            <person name="Liu S.X."/>
            <person name="Lam B."/>
            <person name="Sakano H."/>
            <person name="Wu T."/>
            <person name="Yu G."/>
            <person name="Miranda M."/>
            <person name="Quach H.L."/>
            <person name="Tripp M."/>
            <person name="Chang C.H."/>
            <person name="Lee J.M."/>
            <person name="Toriumi M.J."/>
            <person name="Chan M.M."/>
            <person name="Tang C.C."/>
            <person name="Onodera C.S."/>
            <person name="Deng J.M."/>
            <person name="Akiyama K."/>
            <person name="Ansari Y."/>
            <person name="Arakawa T."/>
            <person name="Banh J."/>
            <person name="Banno F."/>
            <person name="Bowser L."/>
            <person name="Brooks S.Y."/>
            <person name="Carninci P."/>
            <person name="Chao Q."/>
            <person name="Choy N."/>
            <person name="Enju A."/>
            <person name="Goldsmith A.D."/>
            <person name="Gurjal M."/>
            <person name="Hansen N.F."/>
            <person name="Hayashizaki Y."/>
            <person name="Johnson-Hopson C."/>
            <person name="Hsuan V.W."/>
            <person name="Iida K."/>
            <person name="Karnes M."/>
            <person name="Khan S."/>
            <person name="Koesema E."/>
            <person name="Ishida J."/>
            <person name="Jiang P.X."/>
            <person name="Jones T."/>
            <person name="Kawai J."/>
            <person name="Kamiya A."/>
            <person name="Meyers C."/>
            <person name="Nakajima M."/>
            <person name="Narusaka M."/>
            <person name="Seki M."/>
            <person name="Sakurai T."/>
            <person name="Satou M."/>
            <person name="Tamse R."/>
            <person name="Vaysberg M."/>
            <person name="Wallender E.K."/>
            <person name="Wong C."/>
            <person name="Yamamura Y."/>
            <person name="Yuan S."/>
            <person name="Shinozaki K."/>
            <person name="Davis R.W."/>
            <person name="Theologis A."/>
            <person name="Ecker J.R."/>
        </authorList>
    </citation>
    <scope>NUCLEOTIDE SEQUENCE [LARGE SCALE MRNA]</scope>
    <source>
        <strain>cv. Columbia</strain>
    </source>
</reference>
<reference key="4">
    <citation type="submission" date="2002-03" db="EMBL/GenBank/DDBJ databases">
        <title>Full-length cDNA from Arabidopsis thaliana.</title>
        <authorList>
            <person name="Brover V.V."/>
            <person name="Troukhan M.E."/>
            <person name="Alexandrov N.A."/>
            <person name="Lu Y.-P."/>
            <person name="Flavell R.B."/>
            <person name="Feldmann K.A."/>
        </authorList>
    </citation>
    <scope>NUCLEOTIDE SEQUENCE [LARGE SCALE MRNA]</scope>
</reference>
<reference key="5">
    <citation type="journal article" date="2004" name="Plant Cell">
        <title>Genome-wide analysis of Arabidopsis pentatricopeptide repeat proteins reveals their essential role in organelle biogenesis.</title>
        <authorList>
            <person name="Lurin C."/>
            <person name="Andres C."/>
            <person name="Aubourg S."/>
            <person name="Bellaoui M."/>
            <person name="Bitton F."/>
            <person name="Bruyere C."/>
            <person name="Caboche M."/>
            <person name="Debast C."/>
            <person name="Gualberto J."/>
            <person name="Hoffmann B."/>
            <person name="Lecharny A."/>
            <person name="Le Ret M."/>
            <person name="Martin-Magniette M.-L."/>
            <person name="Mireau H."/>
            <person name="Peeters N."/>
            <person name="Renou J.-P."/>
            <person name="Szurek B."/>
            <person name="Taconnat L."/>
            <person name="Small I."/>
        </authorList>
    </citation>
    <scope>GENE FAMILY</scope>
</reference>
<comment type="similarity">
    <text evidence="1">Belongs to the PPR family. P subfamily.</text>
</comment>
<comment type="online information" name="Pentatricopeptide repeat proteins">
    <link uri="https://ppr.plantenergy.uwa.edu.au"/>
</comment>